<proteinExistence type="inferred from homology"/>
<keyword id="KW-0963">Cytoplasm</keyword>
<keyword id="KW-0378">Hydrolase</keyword>
<keyword id="KW-0479">Metal-binding</keyword>
<keyword id="KW-0547">Nucleotide-binding</keyword>
<keyword id="KW-1185">Reference proteome</keyword>
<name>SURE_SYNWW</name>
<evidence type="ECO:0000255" key="1">
    <source>
        <dbReference type="HAMAP-Rule" id="MF_00060"/>
    </source>
</evidence>
<comment type="function">
    <text evidence="1">Nucleotidase that shows phosphatase activity on nucleoside 5'-monophosphates.</text>
</comment>
<comment type="catalytic activity">
    <reaction evidence="1">
        <text>a ribonucleoside 5'-phosphate + H2O = a ribonucleoside + phosphate</text>
        <dbReference type="Rhea" id="RHEA:12484"/>
        <dbReference type="ChEBI" id="CHEBI:15377"/>
        <dbReference type="ChEBI" id="CHEBI:18254"/>
        <dbReference type="ChEBI" id="CHEBI:43474"/>
        <dbReference type="ChEBI" id="CHEBI:58043"/>
        <dbReference type="EC" id="3.1.3.5"/>
    </reaction>
</comment>
<comment type="cofactor">
    <cofactor evidence="1">
        <name>a divalent metal cation</name>
        <dbReference type="ChEBI" id="CHEBI:60240"/>
    </cofactor>
    <text evidence="1">Binds 1 divalent metal cation per subunit.</text>
</comment>
<comment type="subcellular location">
    <subcellularLocation>
        <location evidence="1">Cytoplasm</location>
    </subcellularLocation>
</comment>
<comment type="similarity">
    <text evidence="1">Belongs to the SurE nucleotidase family.</text>
</comment>
<protein>
    <recommendedName>
        <fullName evidence="1">5'-nucleotidase SurE</fullName>
        <ecNumber evidence="1">3.1.3.5</ecNumber>
    </recommendedName>
    <alternativeName>
        <fullName evidence="1">Nucleoside 5'-monophosphate phosphohydrolase</fullName>
    </alternativeName>
</protein>
<reference key="1">
    <citation type="journal article" date="2010" name="Environ. Microbiol.">
        <title>The genome of Syntrophomonas wolfei: new insights into syntrophic metabolism and biohydrogen production.</title>
        <authorList>
            <person name="Sieber J.R."/>
            <person name="Sims D.R."/>
            <person name="Han C."/>
            <person name="Kim E."/>
            <person name="Lykidis A."/>
            <person name="Lapidus A.L."/>
            <person name="McDonnald E."/>
            <person name="Rohlin L."/>
            <person name="Culley D.E."/>
            <person name="Gunsalus R."/>
            <person name="McInerney M.J."/>
        </authorList>
    </citation>
    <scope>NUCLEOTIDE SEQUENCE [LARGE SCALE GENOMIC DNA]</scope>
    <source>
        <strain>DSM 2245B / Goettingen</strain>
    </source>
</reference>
<dbReference type="EC" id="3.1.3.5" evidence="1"/>
<dbReference type="EMBL" id="CP000448">
    <property type="protein sequence ID" value="ABI68460.1"/>
    <property type="molecule type" value="Genomic_DNA"/>
</dbReference>
<dbReference type="RefSeq" id="WP_011640564.1">
    <property type="nucleotide sequence ID" value="NC_008346.1"/>
</dbReference>
<dbReference type="SMR" id="Q0AXU4"/>
<dbReference type="STRING" id="335541.Swol_1150"/>
<dbReference type="KEGG" id="swo:Swol_1150"/>
<dbReference type="eggNOG" id="COG0496">
    <property type="taxonomic scope" value="Bacteria"/>
</dbReference>
<dbReference type="HOGENOM" id="CLU_045192_1_3_9"/>
<dbReference type="OrthoDB" id="9780815at2"/>
<dbReference type="Proteomes" id="UP000001968">
    <property type="component" value="Chromosome"/>
</dbReference>
<dbReference type="GO" id="GO:0005737">
    <property type="term" value="C:cytoplasm"/>
    <property type="evidence" value="ECO:0007669"/>
    <property type="project" value="UniProtKB-SubCell"/>
</dbReference>
<dbReference type="GO" id="GO:0008254">
    <property type="term" value="F:3'-nucleotidase activity"/>
    <property type="evidence" value="ECO:0007669"/>
    <property type="project" value="TreeGrafter"/>
</dbReference>
<dbReference type="GO" id="GO:0008253">
    <property type="term" value="F:5'-nucleotidase activity"/>
    <property type="evidence" value="ECO:0007669"/>
    <property type="project" value="UniProtKB-UniRule"/>
</dbReference>
<dbReference type="GO" id="GO:0004309">
    <property type="term" value="F:exopolyphosphatase activity"/>
    <property type="evidence" value="ECO:0007669"/>
    <property type="project" value="TreeGrafter"/>
</dbReference>
<dbReference type="GO" id="GO:0046872">
    <property type="term" value="F:metal ion binding"/>
    <property type="evidence" value="ECO:0007669"/>
    <property type="project" value="UniProtKB-UniRule"/>
</dbReference>
<dbReference type="GO" id="GO:0000166">
    <property type="term" value="F:nucleotide binding"/>
    <property type="evidence" value="ECO:0007669"/>
    <property type="project" value="UniProtKB-KW"/>
</dbReference>
<dbReference type="FunFam" id="3.40.1210.10:FF:000001">
    <property type="entry name" value="5'/3'-nucleotidase SurE"/>
    <property type="match status" value="1"/>
</dbReference>
<dbReference type="Gene3D" id="3.40.1210.10">
    <property type="entry name" value="Survival protein SurE-like phosphatase/nucleotidase"/>
    <property type="match status" value="1"/>
</dbReference>
<dbReference type="HAMAP" id="MF_00060">
    <property type="entry name" value="SurE"/>
    <property type="match status" value="1"/>
</dbReference>
<dbReference type="InterPro" id="IPR030048">
    <property type="entry name" value="SurE"/>
</dbReference>
<dbReference type="InterPro" id="IPR002828">
    <property type="entry name" value="SurE-like_Pase/nucleotidase"/>
</dbReference>
<dbReference type="InterPro" id="IPR036523">
    <property type="entry name" value="SurE-like_sf"/>
</dbReference>
<dbReference type="NCBIfam" id="NF001490">
    <property type="entry name" value="PRK00346.1-4"/>
    <property type="match status" value="1"/>
</dbReference>
<dbReference type="NCBIfam" id="NF001492">
    <property type="entry name" value="PRK00346.2-2"/>
    <property type="match status" value="1"/>
</dbReference>
<dbReference type="NCBIfam" id="TIGR00087">
    <property type="entry name" value="surE"/>
    <property type="match status" value="1"/>
</dbReference>
<dbReference type="PANTHER" id="PTHR30457">
    <property type="entry name" value="5'-NUCLEOTIDASE SURE"/>
    <property type="match status" value="1"/>
</dbReference>
<dbReference type="PANTHER" id="PTHR30457:SF12">
    <property type="entry name" value="5'_3'-NUCLEOTIDASE SURE"/>
    <property type="match status" value="1"/>
</dbReference>
<dbReference type="Pfam" id="PF01975">
    <property type="entry name" value="SurE"/>
    <property type="match status" value="1"/>
</dbReference>
<dbReference type="SUPFAM" id="SSF64167">
    <property type="entry name" value="SurE-like"/>
    <property type="match status" value="1"/>
</dbReference>
<feature type="chain" id="PRO_1000007794" description="5'-nucleotidase SurE">
    <location>
        <begin position="1"/>
        <end position="264"/>
    </location>
</feature>
<feature type="binding site" evidence="1">
    <location>
        <position position="8"/>
    </location>
    <ligand>
        <name>a divalent metal cation</name>
        <dbReference type="ChEBI" id="CHEBI:60240"/>
    </ligand>
</feature>
<feature type="binding site" evidence="1">
    <location>
        <position position="9"/>
    </location>
    <ligand>
        <name>a divalent metal cation</name>
        <dbReference type="ChEBI" id="CHEBI:60240"/>
    </ligand>
</feature>
<feature type="binding site" evidence="1">
    <location>
        <position position="39"/>
    </location>
    <ligand>
        <name>a divalent metal cation</name>
        <dbReference type="ChEBI" id="CHEBI:60240"/>
    </ligand>
</feature>
<feature type="binding site" evidence="1">
    <location>
        <position position="95"/>
    </location>
    <ligand>
        <name>a divalent metal cation</name>
        <dbReference type="ChEBI" id="CHEBI:60240"/>
    </ligand>
</feature>
<organism>
    <name type="scientific">Syntrophomonas wolfei subsp. wolfei (strain DSM 2245B / Goettingen)</name>
    <dbReference type="NCBI Taxonomy" id="335541"/>
    <lineage>
        <taxon>Bacteria</taxon>
        <taxon>Bacillati</taxon>
        <taxon>Bacillota</taxon>
        <taxon>Clostridia</taxon>
        <taxon>Eubacteriales</taxon>
        <taxon>Syntrophomonadaceae</taxon>
        <taxon>Syntrophomonas</taxon>
    </lineage>
</organism>
<sequence>MRILLTNDDGIHARGIQALIGELGSIAELFVAAPDRERSGTGHSITVFDPIKVIKAKLAGIKAGWVIGGTPVDCVKLASSKLVGDNIDLVVSGINHGPNLGTDVLYSGTVSAAVEGVIMGSPSIAVSLNSFAADTDFSFAARFTRQVIQNLFKNGMEKKTLLNINIPYLCPQDIKGIRITRLGVRNYENLFEERHDPRGNTYFWMGGGVLEEPQEEDSDVNAVQHSYISITPIHFDLTDYHLVEQYRKSFSQFSHLLGEADDNF</sequence>
<accession>Q0AXU4</accession>
<gene>
    <name evidence="1" type="primary">surE</name>
    <name type="ordered locus">Swol_1150</name>
</gene>